<name>DHR11_HUMAN</name>
<keyword id="KW-0002">3D-structure</keyword>
<keyword id="KW-0025">Alternative splicing</keyword>
<keyword id="KW-0443">Lipid metabolism</keyword>
<keyword id="KW-0521">NADP</keyword>
<keyword id="KW-0547">Nucleotide-binding</keyword>
<keyword id="KW-0560">Oxidoreductase</keyword>
<keyword id="KW-1267">Proteomics identification</keyword>
<keyword id="KW-1185">Reference proteome</keyword>
<keyword id="KW-0964">Secreted</keyword>
<keyword id="KW-0732">Signal</keyword>
<keyword id="KW-0753">Steroid metabolism</keyword>
<comment type="function">
    <text evidence="3">Catalyzes the conversion of the 17-keto group of estrone, 4- and 5-androstenes and 5-alpha-androstanes into their 17-beta-hydroxyl metabolites and the conversion of the 3-keto group of 3-, 3,17- and 3,20- diketosteroids into their 3-hydroxyl metabolites. Exhibits reductive 3-beta-hydroxysteroid dehydrogenase activity toward 5-beta-androstanes, 5-beta-pregnanes, 4-pregnenes and bile acids. May also reduce endogenous and exogenous alpha-dicarbonyl compounds and xenobiotic alicyclic ketones.</text>
</comment>
<comment type="catalytic activity">
    <reaction evidence="3">
        <text>a 3beta-hydroxysteroid + NADP(+) = a 3-oxosteroid + NADPH + H(+)</text>
        <dbReference type="Rhea" id="RHEA:34787"/>
        <dbReference type="ChEBI" id="CHEBI:15378"/>
        <dbReference type="ChEBI" id="CHEBI:36836"/>
        <dbReference type="ChEBI" id="CHEBI:47788"/>
        <dbReference type="ChEBI" id="CHEBI:57783"/>
        <dbReference type="ChEBI" id="CHEBI:58349"/>
        <dbReference type="EC" id="1.1.1.270"/>
    </reaction>
</comment>
<comment type="catalytic activity">
    <reaction evidence="3">
        <text>17beta-estradiol + NAD(+) = estrone + NADH + H(+)</text>
        <dbReference type="Rhea" id="RHEA:24612"/>
        <dbReference type="ChEBI" id="CHEBI:15378"/>
        <dbReference type="ChEBI" id="CHEBI:16469"/>
        <dbReference type="ChEBI" id="CHEBI:17263"/>
        <dbReference type="ChEBI" id="CHEBI:57540"/>
        <dbReference type="ChEBI" id="CHEBI:57945"/>
        <dbReference type="EC" id="1.1.1.62"/>
    </reaction>
</comment>
<comment type="catalytic activity">
    <reaction evidence="3">
        <text>17beta-estradiol + NADP(+) = estrone + NADPH + H(+)</text>
        <dbReference type="Rhea" id="RHEA:24616"/>
        <dbReference type="ChEBI" id="CHEBI:15378"/>
        <dbReference type="ChEBI" id="CHEBI:16469"/>
        <dbReference type="ChEBI" id="CHEBI:17263"/>
        <dbReference type="ChEBI" id="CHEBI:57783"/>
        <dbReference type="ChEBI" id="CHEBI:58349"/>
        <dbReference type="EC" id="1.1.1.62"/>
    </reaction>
</comment>
<comment type="activity regulation">
    <text evidence="3">Inhibited by flavonoids including apigenin, luteolin, genistein, kaempferol and quercetin and also by carbenoxolone, zearalenone, glycyrrhetinic, curcumin and flufenamic acid.</text>
</comment>
<comment type="biophysicochemical properties">
    <kinetics>
        <KM evidence="3">1.1 uM for NADPH</KM>
        <KM evidence="3">0.7 uM for estrone (at 37 degrees Celsius)</KM>
        <KM evidence="3">1.3 uM for 5-alpha-androstan-3-alpha-ol-17-one (at 37 degrees Celsius)</KM>
        <KM evidence="3">2.2 uM for 5-alpha-androstan-3-beta-ol-17-one (at 37 degrees Celsius)</KM>
        <KM evidence="3">11 uM for dehydroepiandrosterone (DHEA) (at 37 degrees Celsius)</KM>
        <KM evidence="3">12 uM for DHEA sulfate (at 37 degrees Celsius)</KM>
        <KM evidence="3">19 uM for 4-androsten-3-alpha-ol-17-one (at 37 degrees Celsius)</KM>
        <KM evidence="3">0.7 uM for 5-beta-pregnan-20-beta-ol-3-one (at 37 degrees Celsius)</KM>
        <KM evidence="3">1.1 uM for dehydrolithocholic acid (at 37 degrees Celsius)</KM>
        <KM evidence="3">5.2 uM for 5-beta-cholanic acid-3,7-dione (at 37 degrees Celsius)</KM>
        <KM evidence="3">5.1 uM for 20-alpha-hydroxyprogesterone (at 37 degrees Celsius)</KM>
        <KM evidence="3">44 uM for taurodehydrocholic acid (at 37 degrees Celsius)</KM>
        <KM evidence="3">29 uM for dehydrocholic acid (at 37 degrees Celsius)</KM>
        <KM evidence="3">102 uM for 5-beta-dihydrotestosterone (DHT) (at 37 degrees Celsius)</KM>
        <KM evidence="3">5.2 uM for 5-beta-androstane-3,17-dione (at 37 degrees Celsius)</KM>
        <KM evidence="3">4.6 uM for 4-androstene-3,17-dione (at 37 degrees Celsius)</KM>
        <KM evidence="3">12 uM for 5-alpha-androstane-3,17-dione (at 37 degrees Celsius)</KM>
        <KM evidence="3">2.1 uM for 5-beta-pregnane-21-ol-3,20-dione (at 37 degrees Celsius)</KM>
        <KM evidence="3">3.4 uM for progesterone (at 37 degrees Celsius)</KM>
        <KM evidence="3">15 uM for 5-beta-pregnane-3,20-dione (at 37 degrees Celsius)</KM>
        <KM evidence="3">16 uM for 17-beta-estradiol (at 37 degrees Celsius)</KM>
        <KM evidence="3">30 uM for testosterone (at 37 degrees Celsius)</KM>
        <KM evidence="3">23 uM for 4-androstene-3-alpha,17-beta-diol (at 37 degrees Celsius)</KM>
        <KM evidence="3">11 uM for 5-androstene-3-alpha,17-beta-diol (at 37 degrees Celsius)</KM>
        <KM evidence="3">26 uM for 5-alpha-dihydrotestosterone (DHT) (at 37 degrees Celsius)</KM>
        <KM evidence="3">9.2 uM for 5-alpha-androstane-3-alpha,17-beta-diol (at 37 degrees Celsius)</KM>
        <KM evidence="3">1.1 uM for 5-alpha-androstane-3-beta,17-beta-diol (at 37 degrees Celsius)</KM>
        <KM evidence="3">36 uM for 5-beta-androstan-3-beta-ol-17-one (at 37 degrees Celsius)</KM>
        <KM evidence="3">12 uM for 5-beta-androstane-3-beta,17-beta-diol (at 37 degrees Celsius)</KM>
        <KM evidence="3">22 uM for 3-beta-hydroxyprogesterone (at 37 degrees Celsius)</KM>
        <KM evidence="3">36 uM for 5-beta-pregnan-3-beta-ol-20-one (at 37 degrees Celsius)</KM>
        <KM evidence="3">14 uM for 5-beta-pregnane-3-beta,20-beta-diol (at 37 degrees Celsius)</KM>
        <KM evidence="3">4.7 uM for 5-beta-pregnane-3-beta,21-diol-20-one (at 37 degrees Celsius)</KM>
        <KM evidence="3">0.4 uM for isolithocholic acid (at 37 degrees Celsius)</KM>
        <KM evidence="3">60 uM for 1-phenyl-1,2-propanedione (at 37 degrees Celsius)</KM>
        <KM evidence="3">620 uM for 2,3-hexanedione (at 37 degrees Celsius)</KM>
        <KM evidence="3">201 uM for 2,3-heptanedione (at 37 degrees Celsius)</KM>
        <KM evidence="3">420 uM for 3,4-hexanedione (at 37 degrees Celsius)</KM>
        <KM evidence="3">178 uM for alpha-tetralone (at 37 degrees Celsius)</KM>
        <KM evidence="3">740 uM for loxoprofen (at 37 degrees Celsius)</KM>
        <Vmax evidence="3">43.0 nmol/min/mg enzyme with estrone as substrate (at 37 degrees Celsius)</Vmax>
        <Vmax evidence="3">42.0 nmol/min/mg enzyme with 5-alpha-androstan-3-alpha-ol-17-one as substrate (at 37 degrees Celsius)</Vmax>
        <Vmax evidence="3">49.0 nmol/min/mg enzyme with 5-alpha-androstan-3-beta-ol-17-one as substrate (at 37 degrees Celsius)</Vmax>
        <Vmax evidence="3">118.0 nmol/min/mg enzyme with dehydroepiandrosterone (DHEA) as substrate (at 37 degrees Celsius)</Vmax>
        <Vmax evidence="3">60.0 nmol/min/mg enzyme with DHEA sulfate as substrate (at 37 degrees Celsius)</Vmax>
        <Vmax evidence="3">43.0 nmol/min/mg enzyme with 4-androsten-3-alpha-ol-17-one as substrate (at 37 degrees Celsius)</Vmax>
        <Vmax evidence="3">44.0 nmol/min/mg enzyme with 5-beta-pregnan-20-beta-ol-3-one as substrate (at 37 degrees Celsius)</Vmax>
        <Vmax evidence="3">44.0 nmol/min/mg enzyme with dehydrolithocholic acid as substrate (at 37 degrees Celsius)</Vmax>
        <Vmax evidence="3">85.0 nmol/min/mg enzyme with 5-beta-cholanic acid-3,7-dione as substrate (at 37 degrees Celsius)</Vmax>
        <Vmax evidence="3">40.0 nmol/min/mg enzyme with 20-alpha-hydroxyprogesterone as substrate (at 37 degrees Celsius)</Vmax>
        <Vmax evidence="3">200.0 nmol/min/mg enzyme with taurodehydrocholic acid as substrate (at 37 degrees Celsius)</Vmax>
        <Vmax evidence="3">119.0 nmol/min/mg enzyme with dehydrocholic acid as substrate (at 37 degrees Celsius)</Vmax>
        <Vmax evidence="3">389.0 nmol/min/mg enzyme with 5-beta-dihydrotestosterone (DTH) as substrate (at 37 degrees Celsius)</Vmax>
        <Vmax evidence="3">62.0 nmol/min/mg enzyme with 5-beta-androstane-3,17-dione as substrate (at 37 degrees Celsius)</Vmax>
        <Vmax evidence="3">52.0 nmol/min/mg enzyme with 4-androstene-3,17-dione as substrate (at 37 degrees Celsius)</Vmax>
        <Vmax evidence="3">57.0 nmol/min/mg enzyme with 5-alpha-androstane-3,17-dione as substrate (at 37 degrees Celsius)</Vmax>
        <Vmax evidence="3">49.0 nmol/min/mg enzyme with 5-beta-pregnane-21-ol-3,20-dione as substrate (at 37 degrees Celsius)</Vmax>
        <Vmax evidence="3">36.0 nmol/min/mg enzyme with progesterone as substrate (at 37 degrees Celsius)</Vmax>
        <Vmax evidence="3">123.0 nmol/min/mg enzyme with 5-beta-pregnane-3,20-dione as substrate (at 37 degrees Celsius)</Vmax>
        <Vmax evidence="3">246.0 nmol/min/mg enzyme with 17-beta-estradiol as substrate (at 37 degrees Celsius)</Vmax>
        <Vmax evidence="3">238.0 nmol/min/mg enzyme with testosterone as substrate (at 37 degrees Celsius)</Vmax>
        <Vmax evidence="3">33.0 nmol/min/mg enzyme with 4-androstene-3-alpha,17-beta-diol as substrate (at 37 degrees Celsius)</Vmax>
        <Vmax evidence="3">366.0 nmol/min/mg enzyme with 5-androstene-3-alpha,17-beta-diol as substrate (at 37 degrees Celsius)</Vmax>
        <Vmax evidence="3">117.0 nmol/min/mg enzyme with 5-alpha-dihydrotestosterone (DHT) as substrate (at 37 degrees Celsius)</Vmax>
        <Vmax evidence="3">40.0 nmol/min/mg enzyme with 5-alpha-androstane-3-alpha,17-beta-diol as substrate (at 37 degrees Celsius)</Vmax>
        <Vmax evidence="3">96.0 nmol/min/mg enzyme with 5-alpha-androstane-3-beta,17-beta-diol as substrate (at 37 degrees Celsius)</Vmax>
        <Vmax evidence="3">137.0 nmol/min/mg enzyme with 5-beta-androstan-3-beta-ol-17-one as substrate (at 37 degrees Celsius)</Vmax>
        <Vmax evidence="3">511.0 nmol/min/mg enzyme with 5-beta-androstane-3-beta,17-beta-diol as substrate (at 37 degrees Celsius)</Vmax>
        <Vmax evidence="3">364.0 nmol/min/mg enzyme with 3-beta-hydroxyprogesterone as substrate (at 37 degrees Celsius)</Vmax>
        <Vmax evidence="3">268.0 nmol/min/mg enzyme with 5-beta-pregnan-3-beta-ol-20-one as substrate (at 37 degrees Celsius)</Vmax>
        <Vmax evidence="3">220.0 nmol/min/mg enzyme with 5-beta-pregnane-3-beta,20-beta-diol as substrate (at 37 degrees Celsius)</Vmax>
        <Vmax evidence="3">96.0 nmol/min/mg enzyme with 5-beta-pregnane-3-beta,21-diol-20-one as substrate (at 37 degrees Celsius)</Vmax>
        <Vmax evidence="3">28.0 nmol/min/mg enzyme with isolithocholic acid as substrate (at 37 degrees Celsius)</Vmax>
        <Vmax evidence="3">69.0 nmol/min/mg enzyme with 1-phenyl-1,2-propanedione as substrate (at 37 degrees Celsius)</Vmax>
        <Vmax evidence="3">331.0 nmol/min/mg enzyme with 2,3-hexanedione as substrate (at 37 degrees Celsius)</Vmax>
        <Vmax evidence="3">86.0 nmol/min/mg enzyme with 2,3-heptanedione as substrate (at 37 degrees Celsius)</Vmax>
        <Vmax evidence="3">166.0 nmol/min/mg enzyme with 3,4-hexanedione as substrate (at 37 degrees Celsius)</Vmax>
        <Vmax evidence="3">67.0 nmol/min/mg enzyme with alpha-tetralone as substrate (at 37 degrees Celsius)</Vmax>
        <Vmax evidence="3">51.0 nmol/min/mg enzyme with loxoprofen as substrate (at 37 degrees Celsius)</Vmax>
    </kinetics>
</comment>
<comment type="pathway">
    <text evidence="9">Steroid biosynthesis; estrogen biosynthesis.</text>
</comment>
<comment type="subunit">
    <text evidence="4">Homotetramer.</text>
</comment>
<comment type="interaction">
    <interactant intactId="EBI-12225017">
        <id>Q6UWP2-2</id>
    </interactant>
    <interactant intactId="EBI-80440">
        <id>Q92796</id>
        <label>DLG3</label>
    </interactant>
    <organismsDiffer>false</organismsDiffer>
    <experiments>3</experiments>
</comment>
<comment type="subcellular location">
    <subcellularLocation>
        <location evidence="8">Secreted</location>
    </subcellularLocation>
</comment>
<comment type="alternative products">
    <event type="alternative splicing"/>
    <isoform>
        <id>Q6UWP2-1</id>
        <name>1</name>
        <sequence type="displayed"/>
    </isoform>
    <isoform>
        <id>Q6UWP2-2</id>
        <name>2</name>
        <sequence type="described" ref="VSP_016987"/>
    </isoform>
    <isoform>
        <id>Q6UWP2-3</id>
        <name>3</name>
        <sequence type="described" ref="VSP_059104"/>
    </isoform>
</comment>
<comment type="tissue specificity">
    <text evidence="3">Isoform 1: Ubiquitously expressed, with highest levels in testis, small intestine, colon, kidney, brain and heart. Isoform 3: Expressed in brain, heart and skeletal muscle.</text>
</comment>
<comment type="similarity">
    <text evidence="8">Belongs to the short-chain dehydrogenases/reductases (SDR) family.</text>
</comment>
<proteinExistence type="evidence at protein level"/>
<gene>
    <name type="primary">DHRS11</name>
    <name evidence="6" type="synonym">SDR24C1</name>
    <name type="ORF">UNQ836/PRO1774</name>
</gene>
<protein>
    <recommendedName>
        <fullName>Dehydrogenase/reductase SDR family member 11</fullName>
    </recommendedName>
    <alternativeName>
        <fullName evidence="9">17-beta-hydroxysteroid dehydrogenase</fullName>
    </alternativeName>
    <alternativeName>
        <fullName evidence="9">3-beta-hydroxysteroid 3-dehydrogenase</fullName>
        <ecNumber evidence="3">1.1.1.270</ecNumber>
    </alternativeName>
    <alternativeName>
        <fullName evidence="9">Estradiol 17-beta-dehydrogenase</fullName>
        <ecNumber evidence="3">1.1.1.62</ecNumber>
    </alternativeName>
    <alternativeName>
        <fullName evidence="6">Short-chain dehydrogenase/reductase family 24C member 1</fullName>
    </alternativeName>
</protein>
<dbReference type="EC" id="1.1.1.270" evidence="3"/>
<dbReference type="EC" id="1.1.1.62" evidence="3"/>
<dbReference type="EMBL" id="LC110386">
    <property type="protein sequence ID" value="BAU36404.1"/>
    <property type="molecule type" value="mRNA"/>
</dbReference>
<dbReference type="EMBL" id="AY358712">
    <property type="protein sequence ID" value="AAQ89074.1"/>
    <property type="molecule type" value="mRNA"/>
</dbReference>
<dbReference type="EMBL" id="AK026196">
    <property type="protein sequence ID" value="BAB15390.1"/>
    <property type="molecule type" value="mRNA"/>
</dbReference>
<dbReference type="EMBL" id="AK315735">
    <property type="protein sequence ID" value="BAG38090.1"/>
    <property type="molecule type" value="mRNA"/>
</dbReference>
<dbReference type="EMBL" id="CR457356">
    <property type="protein sequence ID" value="CAG33637.1"/>
    <property type="molecule type" value="mRNA"/>
</dbReference>
<dbReference type="EMBL" id="CH471199">
    <property type="protein sequence ID" value="EAW57568.1"/>
    <property type="molecule type" value="Genomic_DNA"/>
</dbReference>
<dbReference type="EMBL" id="BC002731">
    <property type="protein sequence ID" value="AAH02731.2"/>
    <property type="molecule type" value="mRNA"/>
</dbReference>
<dbReference type="CCDS" id="CCDS11315.2">
    <molecule id="Q6UWP2-1"/>
</dbReference>
<dbReference type="RefSeq" id="NP_077284.2">
    <molecule id="Q6UWP2-1"/>
    <property type="nucleotide sequence ID" value="NM_024308.4"/>
</dbReference>
<dbReference type="RefSeq" id="XP_005257715.1">
    <molecule id="Q6UWP2-3"/>
    <property type="nucleotide sequence ID" value="XM_005257658.4"/>
</dbReference>
<dbReference type="RefSeq" id="XP_054173159.1">
    <molecule id="Q6UWP2-3"/>
    <property type="nucleotide sequence ID" value="XM_054317184.1"/>
</dbReference>
<dbReference type="RefSeq" id="XP_054185307.1">
    <molecule id="Q6UWP2-3"/>
    <property type="nucleotide sequence ID" value="XM_054329332.1"/>
</dbReference>
<dbReference type="PDB" id="1XG5">
    <property type="method" value="X-ray"/>
    <property type="resolution" value="1.53 A"/>
    <property type="chains" value="A/B/C/D=1-256"/>
</dbReference>
<dbReference type="PDBsum" id="1XG5"/>
<dbReference type="SMR" id="Q6UWP2"/>
<dbReference type="BioGRID" id="122572">
    <property type="interactions" value="8"/>
</dbReference>
<dbReference type="FunCoup" id="Q6UWP2">
    <property type="interactions" value="63"/>
</dbReference>
<dbReference type="IntAct" id="Q6UWP2">
    <property type="interactions" value="2"/>
</dbReference>
<dbReference type="STRING" id="9606.ENSP00000482704"/>
<dbReference type="DrugBank" id="DB03461">
    <property type="generic name" value="Nicotinamide adenine dinucleotide phosphate"/>
</dbReference>
<dbReference type="iPTMnet" id="Q6UWP2"/>
<dbReference type="PhosphoSitePlus" id="Q6UWP2"/>
<dbReference type="SwissPalm" id="Q6UWP2"/>
<dbReference type="BioMuta" id="DHRS11"/>
<dbReference type="DMDM" id="74749397"/>
<dbReference type="jPOST" id="Q6UWP2"/>
<dbReference type="MassIVE" id="Q6UWP2"/>
<dbReference type="PaxDb" id="9606-ENSP00000482704"/>
<dbReference type="PeptideAtlas" id="Q6UWP2"/>
<dbReference type="ProteomicsDB" id="67507">
    <molecule id="Q6UWP2-1"/>
</dbReference>
<dbReference type="ProteomicsDB" id="67508">
    <molecule id="Q6UWP2-2"/>
</dbReference>
<dbReference type="Pumba" id="Q6UWP2"/>
<dbReference type="Antibodypedia" id="72789">
    <property type="antibodies" value="187 antibodies from 25 providers"/>
</dbReference>
<dbReference type="DNASU" id="79154"/>
<dbReference type="Ensembl" id="ENST00000611337.4">
    <molecule id="Q6UWP2-2"/>
    <property type="protein sequence ID" value="ENSP00000477603.1"/>
    <property type="gene ID" value="ENSG00000278535.5"/>
</dbReference>
<dbReference type="Ensembl" id="ENST00000618403.5">
    <molecule id="Q6UWP2-1"/>
    <property type="protein sequence ID" value="ENSP00000482704.1"/>
    <property type="gene ID" value="ENSG00000278535.5"/>
</dbReference>
<dbReference type="Ensembl" id="ENST00000621143.2">
    <molecule id="Q6UWP2-1"/>
    <property type="protein sequence ID" value="ENSP00000483747.1"/>
    <property type="gene ID" value="ENSG00000275397.2"/>
</dbReference>
<dbReference type="Ensembl" id="ENST00000631686.1">
    <molecule id="Q6UWP2-2"/>
    <property type="protein sequence ID" value="ENSP00000488610.1"/>
    <property type="gene ID" value="ENSG00000275397.2"/>
</dbReference>
<dbReference type="GeneID" id="79154"/>
<dbReference type="KEGG" id="hsa:79154"/>
<dbReference type="MANE-Select" id="ENST00000618403.5">
    <property type="protein sequence ID" value="ENSP00000482704.1"/>
    <property type="RefSeq nucleotide sequence ID" value="NM_024308.4"/>
    <property type="RefSeq protein sequence ID" value="NP_077284.2"/>
</dbReference>
<dbReference type="UCSC" id="uc002hnd.4">
    <molecule id="Q6UWP2-1"/>
    <property type="organism name" value="human"/>
</dbReference>
<dbReference type="AGR" id="HGNC:28639"/>
<dbReference type="CTD" id="79154"/>
<dbReference type="DisGeNET" id="79154"/>
<dbReference type="GeneCards" id="DHRS11"/>
<dbReference type="HGNC" id="HGNC:28639">
    <property type="gene designation" value="DHRS11"/>
</dbReference>
<dbReference type="HPA" id="ENSG00000278535">
    <property type="expression patterns" value="Tissue enriched (intestine)"/>
</dbReference>
<dbReference type="MIM" id="616159">
    <property type="type" value="gene"/>
</dbReference>
<dbReference type="neXtProt" id="NX_Q6UWP2"/>
<dbReference type="OpenTargets" id="ENSG00000278535"/>
<dbReference type="PharmGKB" id="PA164718841"/>
<dbReference type="VEuPathDB" id="HostDB:ENSG00000278535"/>
<dbReference type="eggNOG" id="KOG1205">
    <property type="taxonomic scope" value="Eukaryota"/>
</dbReference>
<dbReference type="GeneTree" id="ENSGT00840000129887"/>
<dbReference type="InParanoid" id="Q6UWP2"/>
<dbReference type="OMA" id="WRWMWET"/>
<dbReference type="OrthoDB" id="1933717at2759"/>
<dbReference type="PAN-GO" id="Q6UWP2">
    <property type="GO annotations" value="0 GO annotations based on evolutionary models"/>
</dbReference>
<dbReference type="PhylomeDB" id="Q6UWP2"/>
<dbReference type="TreeFam" id="TF324174"/>
<dbReference type="PathwayCommons" id="Q6UWP2"/>
<dbReference type="SignaLink" id="Q6UWP2"/>
<dbReference type="UniPathway" id="UPA00769"/>
<dbReference type="BioGRID-ORCS" id="79154">
    <property type="hits" value="11 hits in 1154 CRISPR screens"/>
</dbReference>
<dbReference type="ChiTaRS" id="DHRS11">
    <property type="organism name" value="human"/>
</dbReference>
<dbReference type="EvolutionaryTrace" id="Q6UWP2"/>
<dbReference type="GenomeRNAi" id="79154"/>
<dbReference type="Pharos" id="Q6UWP2">
    <property type="development level" value="Tbio"/>
</dbReference>
<dbReference type="PRO" id="PR:Q6UWP2"/>
<dbReference type="Proteomes" id="UP000005640">
    <property type="component" value="Chromosome 17"/>
</dbReference>
<dbReference type="RNAct" id="Q6UWP2">
    <property type="molecule type" value="protein"/>
</dbReference>
<dbReference type="Bgee" id="ENSG00000278535">
    <property type="expression patterns" value="Expressed in duodenum and 97 other cell types or tissues"/>
</dbReference>
<dbReference type="ExpressionAtlas" id="Q6UWP2">
    <property type="expression patterns" value="baseline and differential"/>
</dbReference>
<dbReference type="GO" id="GO:0005576">
    <property type="term" value="C:extracellular region"/>
    <property type="evidence" value="ECO:0007669"/>
    <property type="project" value="UniProtKB-SubCell"/>
</dbReference>
<dbReference type="GO" id="GO:0072582">
    <property type="term" value="F:17-beta-hydroxysteroid dehydrogenase (NADP+) activity"/>
    <property type="evidence" value="ECO:0000314"/>
    <property type="project" value="UniProtKB"/>
</dbReference>
<dbReference type="GO" id="GO:0000253">
    <property type="term" value="F:3-beta-hydroxysteroid 3-dehydrogenase (NADP+) activity"/>
    <property type="evidence" value="ECO:0000314"/>
    <property type="project" value="UniProtKB"/>
</dbReference>
<dbReference type="GO" id="GO:0004303">
    <property type="term" value="F:estradiol 17-beta-dehydrogenase [NAD(P)+] activity"/>
    <property type="evidence" value="ECO:0000314"/>
    <property type="project" value="UniProtKB"/>
</dbReference>
<dbReference type="GO" id="GO:0000166">
    <property type="term" value="F:nucleotide binding"/>
    <property type="evidence" value="ECO:0007669"/>
    <property type="project" value="UniProtKB-KW"/>
</dbReference>
<dbReference type="GO" id="GO:0006703">
    <property type="term" value="P:estrogen biosynthetic process"/>
    <property type="evidence" value="ECO:0007669"/>
    <property type="project" value="UniProtKB-UniPathway"/>
</dbReference>
<dbReference type="GO" id="GO:0006694">
    <property type="term" value="P:steroid biosynthetic process"/>
    <property type="evidence" value="ECO:0000314"/>
    <property type="project" value="UniProtKB"/>
</dbReference>
<dbReference type="CDD" id="cd05343">
    <property type="entry name" value="Mgc4172-like_SDR_c"/>
    <property type="match status" value="1"/>
</dbReference>
<dbReference type="FunFam" id="3.40.50.720:FF:000047">
    <property type="entry name" value="NADP-dependent L-serine/L-allo-threonine dehydrogenase"/>
    <property type="match status" value="1"/>
</dbReference>
<dbReference type="Gene3D" id="3.40.50.720">
    <property type="entry name" value="NAD(P)-binding Rossmann-like Domain"/>
    <property type="match status" value="1"/>
</dbReference>
<dbReference type="InterPro" id="IPR036291">
    <property type="entry name" value="NAD(P)-bd_dom_sf"/>
</dbReference>
<dbReference type="InterPro" id="IPR020904">
    <property type="entry name" value="Sc_DH/Rdtase_CS"/>
</dbReference>
<dbReference type="InterPro" id="IPR002347">
    <property type="entry name" value="SDR_fam"/>
</dbReference>
<dbReference type="PANTHER" id="PTHR43115">
    <property type="entry name" value="DEHYDROGENASE/REDUCTASE SDR FAMILY MEMBER 11"/>
    <property type="match status" value="1"/>
</dbReference>
<dbReference type="PANTHER" id="PTHR43115:SF4">
    <property type="entry name" value="DEHYDROGENASE_REDUCTASE SDR FAMILY MEMBER 11"/>
    <property type="match status" value="1"/>
</dbReference>
<dbReference type="Pfam" id="PF00106">
    <property type="entry name" value="adh_short"/>
    <property type="match status" value="1"/>
</dbReference>
<dbReference type="PRINTS" id="PR00081">
    <property type="entry name" value="GDHRDH"/>
</dbReference>
<dbReference type="PRINTS" id="PR00080">
    <property type="entry name" value="SDRFAMILY"/>
</dbReference>
<dbReference type="SUPFAM" id="SSF51735">
    <property type="entry name" value="NAD(P)-binding Rossmann-fold domains"/>
    <property type="match status" value="1"/>
</dbReference>
<dbReference type="PROSITE" id="PS00061">
    <property type="entry name" value="ADH_SHORT"/>
    <property type="match status" value="1"/>
</dbReference>
<evidence type="ECO:0000255" key="1"/>
<evidence type="ECO:0000255" key="2">
    <source>
        <dbReference type="PROSITE-ProRule" id="PRU10001"/>
    </source>
</evidence>
<evidence type="ECO:0000269" key="3">
    <source>
    </source>
</evidence>
<evidence type="ECO:0000269" key="4">
    <source ref="8"/>
</evidence>
<evidence type="ECO:0000303" key="5">
    <source>
    </source>
</evidence>
<evidence type="ECO:0000303" key="6">
    <source>
    </source>
</evidence>
<evidence type="ECO:0000303" key="7">
    <source ref="4"/>
</evidence>
<evidence type="ECO:0000305" key="8"/>
<evidence type="ECO:0000305" key="9">
    <source>
    </source>
</evidence>
<evidence type="ECO:0007744" key="10">
    <source>
        <dbReference type="PDB" id="1XG5"/>
    </source>
</evidence>
<evidence type="ECO:0007829" key="11">
    <source>
        <dbReference type="PDB" id="1XG5"/>
    </source>
</evidence>
<accession>Q6UWP2</accession>
<accession>A0A0U5BLD0</accession>
<accession>B2RDZ3</accession>
<accession>Q9BUC7</accession>
<accession>Q9H674</accession>
<feature type="signal peptide" evidence="1">
    <location>
        <begin position="1"/>
        <end position="30"/>
    </location>
</feature>
<feature type="chain" id="PRO_0000045490" description="Dehydrogenase/reductase SDR family member 11">
    <location>
        <begin position="31"/>
        <end position="260"/>
    </location>
</feature>
<feature type="active site" description="Proton acceptor" evidence="2">
    <location>
        <position position="166"/>
    </location>
</feature>
<feature type="binding site" evidence="10">
    <location>
        <begin position="18"/>
        <end position="23"/>
    </location>
    <ligand>
        <name>NADP(+)</name>
        <dbReference type="ChEBI" id="CHEBI:58349"/>
    </ligand>
</feature>
<feature type="binding site" evidence="10">
    <location>
        <begin position="43"/>
        <end position="44"/>
    </location>
    <ligand>
        <name>NADP(+)</name>
        <dbReference type="ChEBI" id="CHEBI:58349"/>
    </ligand>
</feature>
<feature type="binding site" evidence="10">
    <location>
        <position position="49"/>
    </location>
    <ligand>
        <name>NADP(+)</name>
        <dbReference type="ChEBI" id="CHEBI:58349"/>
    </ligand>
</feature>
<feature type="binding site" evidence="10">
    <location>
        <begin position="70"/>
        <end position="71"/>
    </location>
    <ligand>
        <name>NADP(+)</name>
        <dbReference type="ChEBI" id="CHEBI:58349"/>
    </ligand>
</feature>
<feature type="binding site" evidence="10">
    <location>
        <position position="97"/>
    </location>
    <ligand>
        <name>NADP(+)</name>
        <dbReference type="ChEBI" id="CHEBI:58349"/>
    </ligand>
</feature>
<feature type="binding site" evidence="10">
    <location>
        <position position="151"/>
    </location>
    <ligand>
        <name>substrate</name>
    </ligand>
</feature>
<feature type="binding site" evidence="10">
    <location>
        <position position="166"/>
    </location>
    <ligand>
        <name>NADP(+)</name>
        <dbReference type="ChEBI" id="CHEBI:58349"/>
    </ligand>
</feature>
<feature type="binding site" evidence="10">
    <location>
        <position position="166"/>
    </location>
    <ligand>
        <name>substrate</name>
    </ligand>
</feature>
<feature type="binding site" evidence="10">
    <location>
        <position position="170"/>
    </location>
    <ligand>
        <name>NADP(+)</name>
        <dbReference type="ChEBI" id="CHEBI:58349"/>
    </ligand>
</feature>
<feature type="binding site" evidence="10">
    <location>
        <begin position="201"/>
        <end position="204"/>
    </location>
    <ligand>
        <name>NADP(+)</name>
        <dbReference type="ChEBI" id="CHEBI:58349"/>
    </ligand>
</feature>
<feature type="binding site" evidence="10">
    <location>
        <position position="208"/>
    </location>
    <ligand>
        <name>NADP(+)</name>
        <dbReference type="ChEBI" id="CHEBI:58349"/>
    </ligand>
</feature>
<feature type="splice variant" id="VSP_016987" description="In isoform 2." evidence="5 7">
    <location>
        <begin position="1"/>
        <end position="79"/>
    </location>
</feature>
<feature type="splice variant" id="VSP_059104" description="In isoform 3." evidence="8">
    <location>
        <begin position="196"/>
        <end position="226"/>
    </location>
</feature>
<feature type="sequence conflict" description="In Ref. 3; BAB15390 and 4; CAG33637." evidence="8" ref="3 4">
    <original>F</original>
    <variation>S</variation>
    <location>
        <position position="81"/>
    </location>
</feature>
<feature type="helix" evidence="11">
    <location>
        <begin position="7"/>
        <end position="9"/>
    </location>
</feature>
<feature type="strand" evidence="11">
    <location>
        <begin position="13"/>
        <end position="18"/>
    </location>
</feature>
<feature type="helix" evidence="11">
    <location>
        <begin position="22"/>
        <end position="33"/>
    </location>
</feature>
<feature type="strand" evidence="11">
    <location>
        <begin position="37"/>
        <end position="43"/>
    </location>
</feature>
<feature type="helix" evidence="11">
    <location>
        <begin position="45"/>
        <end position="57"/>
    </location>
</feature>
<feature type="strand" evidence="11">
    <location>
        <begin position="61"/>
        <end position="68"/>
    </location>
</feature>
<feature type="helix" evidence="11">
    <location>
        <begin position="74"/>
        <end position="88"/>
    </location>
</feature>
<feature type="strand" evidence="11">
    <location>
        <begin position="92"/>
        <end position="96"/>
    </location>
</feature>
<feature type="turn" evidence="11">
    <location>
        <begin position="106"/>
        <end position="108"/>
    </location>
</feature>
<feature type="helix" evidence="11">
    <location>
        <begin position="111"/>
        <end position="121"/>
    </location>
</feature>
<feature type="helix" evidence="11">
    <location>
        <begin position="123"/>
        <end position="138"/>
    </location>
</feature>
<feature type="strand" evidence="11">
    <location>
        <begin position="145"/>
        <end position="149"/>
    </location>
</feature>
<feature type="helix" evidence="11">
    <location>
        <begin position="152"/>
        <end position="154"/>
    </location>
</feature>
<feature type="helix" evidence="11">
    <location>
        <begin position="161"/>
        <end position="163"/>
    </location>
</feature>
<feature type="helix" evidence="11">
    <location>
        <begin position="164"/>
        <end position="186"/>
    </location>
</feature>
<feature type="strand" evidence="11">
    <location>
        <begin position="192"/>
        <end position="199"/>
    </location>
</feature>
<feature type="helix" evidence="11">
    <location>
        <begin position="205"/>
        <end position="209"/>
    </location>
</feature>
<feature type="turn" evidence="11">
    <location>
        <begin position="210"/>
        <end position="212"/>
    </location>
</feature>
<feature type="helix" evidence="11">
    <location>
        <begin position="214"/>
        <end position="221"/>
    </location>
</feature>
<feature type="helix" evidence="11">
    <location>
        <begin position="229"/>
        <end position="241"/>
    </location>
</feature>
<feature type="strand" evidence="11">
    <location>
        <begin position="246"/>
        <end position="255"/>
    </location>
</feature>
<reference key="1">
    <citation type="journal article" date="2016" name="Biochem. Biophys. Res. Commun.">
        <title>Human dehydrogenase/reductase (SDR family) member 11 is a novel type of 17beta-hydroxysteroid dehydrogenase.</title>
        <authorList>
            <person name="Endo S."/>
            <person name="Miyagi N."/>
            <person name="Matsunaga T."/>
            <person name="Hara A."/>
            <person name="Ikari A."/>
        </authorList>
    </citation>
    <scope>NUCLEOTIDE SEQUENCE [MRNA] (ISOFORM 3)</scope>
    <scope>FUNCTION</scope>
    <scope>CATALYTIC ACTIVITY</scope>
    <scope>ACTIVITY REGULATION</scope>
    <scope>BIOPHYSICOCHEMICAL PROPERTIES</scope>
    <scope>TISSUE SPECIFICITY</scope>
</reference>
<reference key="2">
    <citation type="journal article" date="2003" name="Genome Res.">
        <title>The secreted protein discovery initiative (SPDI), a large-scale effort to identify novel human secreted and transmembrane proteins: a bioinformatics assessment.</title>
        <authorList>
            <person name="Clark H.F."/>
            <person name="Gurney A.L."/>
            <person name="Abaya E."/>
            <person name="Baker K."/>
            <person name="Baldwin D.T."/>
            <person name="Brush J."/>
            <person name="Chen J."/>
            <person name="Chow B."/>
            <person name="Chui C."/>
            <person name="Crowley C."/>
            <person name="Currell B."/>
            <person name="Deuel B."/>
            <person name="Dowd P."/>
            <person name="Eaton D."/>
            <person name="Foster J.S."/>
            <person name="Grimaldi C."/>
            <person name="Gu Q."/>
            <person name="Hass P.E."/>
            <person name="Heldens S."/>
            <person name="Huang A."/>
            <person name="Kim H.S."/>
            <person name="Klimowski L."/>
            <person name="Jin Y."/>
            <person name="Johnson S."/>
            <person name="Lee J."/>
            <person name="Lewis L."/>
            <person name="Liao D."/>
            <person name="Mark M.R."/>
            <person name="Robbie E."/>
            <person name="Sanchez C."/>
            <person name="Schoenfeld J."/>
            <person name="Seshagiri S."/>
            <person name="Simmons L."/>
            <person name="Singh J."/>
            <person name="Smith V."/>
            <person name="Stinson J."/>
            <person name="Vagts A."/>
            <person name="Vandlen R.L."/>
            <person name="Watanabe C."/>
            <person name="Wieand D."/>
            <person name="Woods K."/>
            <person name="Xie M.-H."/>
            <person name="Yansura D.G."/>
            <person name="Yi S."/>
            <person name="Yu G."/>
            <person name="Yuan J."/>
            <person name="Zhang M."/>
            <person name="Zhang Z."/>
            <person name="Goddard A.D."/>
            <person name="Wood W.I."/>
            <person name="Godowski P.J."/>
            <person name="Gray A.M."/>
        </authorList>
    </citation>
    <scope>NUCLEOTIDE SEQUENCE [LARGE SCALE MRNA] (ISOFORM 1)</scope>
</reference>
<reference key="3">
    <citation type="journal article" date="2004" name="Nat. Genet.">
        <title>Complete sequencing and characterization of 21,243 full-length human cDNAs.</title>
        <authorList>
            <person name="Ota T."/>
            <person name="Suzuki Y."/>
            <person name="Nishikawa T."/>
            <person name="Otsuki T."/>
            <person name="Sugiyama T."/>
            <person name="Irie R."/>
            <person name="Wakamatsu A."/>
            <person name="Hayashi K."/>
            <person name="Sato H."/>
            <person name="Nagai K."/>
            <person name="Kimura K."/>
            <person name="Makita H."/>
            <person name="Sekine M."/>
            <person name="Obayashi M."/>
            <person name="Nishi T."/>
            <person name="Shibahara T."/>
            <person name="Tanaka T."/>
            <person name="Ishii S."/>
            <person name="Yamamoto J."/>
            <person name="Saito K."/>
            <person name="Kawai Y."/>
            <person name="Isono Y."/>
            <person name="Nakamura Y."/>
            <person name="Nagahari K."/>
            <person name="Murakami K."/>
            <person name="Yasuda T."/>
            <person name="Iwayanagi T."/>
            <person name="Wagatsuma M."/>
            <person name="Shiratori A."/>
            <person name="Sudo H."/>
            <person name="Hosoiri T."/>
            <person name="Kaku Y."/>
            <person name="Kodaira H."/>
            <person name="Kondo H."/>
            <person name="Sugawara M."/>
            <person name="Takahashi M."/>
            <person name="Kanda K."/>
            <person name="Yokoi T."/>
            <person name="Furuya T."/>
            <person name="Kikkawa E."/>
            <person name="Omura Y."/>
            <person name="Abe K."/>
            <person name="Kamihara K."/>
            <person name="Katsuta N."/>
            <person name="Sato K."/>
            <person name="Tanikawa M."/>
            <person name="Yamazaki M."/>
            <person name="Ninomiya K."/>
            <person name="Ishibashi T."/>
            <person name="Yamashita H."/>
            <person name="Murakawa K."/>
            <person name="Fujimori K."/>
            <person name="Tanai H."/>
            <person name="Kimata M."/>
            <person name="Watanabe M."/>
            <person name="Hiraoka S."/>
            <person name="Chiba Y."/>
            <person name="Ishida S."/>
            <person name="Ono Y."/>
            <person name="Takiguchi S."/>
            <person name="Watanabe S."/>
            <person name="Yosida M."/>
            <person name="Hotuta T."/>
            <person name="Kusano J."/>
            <person name="Kanehori K."/>
            <person name="Takahashi-Fujii A."/>
            <person name="Hara H."/>
            <person name="Tanase T.-O."/>
            <person name="Nomura Y."/>
            <person name="Togiya S."/>
            <person name="Komai F."/>
            <person name="Hara R."/>
            <person name="Takeuchi K."/>
            <person name="Arita M."/>
            <person name="Imose N."/>
            <person name="Musashino K."/>
            <person name="Yuuki H."/>
            <person name="Oshima A."/>
            <person name="Sasaki N."/>
            <person name="Aotsuka S."/>
            <person name="Yoshikawa Y."/>
            <person name="Matsunawa H."/>
            <person name="Ichihara T."/>
            <person name="Shiohata N."/>
            <person name="Sano S."/>
            <person name="Moriya S."/>
            <person name="Momiyama H."/>
            <person name="Satoh N."/>
            <person name="Takami S."/>
            <person name="Terashima Y."/>
            <person name="Suzuki O."/>
            <person name="Nakagawa S."/>
            <person name="Senoh A."/>
            <person name="Mizoguchi H."/>
            <person name="Goto Y."/>
            <person name="Shimizu F."/>
            <person name="Wakebe H."/>
            <person name="Hishigaki H."/>
            <person name="Watanabe T."/>
            <person name="Sugiyama A."/>
            <person name="Takemoto M."/>
            <person name="Kawakami B."/>
            <person name="Yamazaki M."/>
            <person name="Watanabe K."/>
            <person name="Kumagai A."/>
            <person name="Itakura S."/>
            <person name="Fukuzumi Y."/>
            <person name="Fujimori Y."/>
            <person name="Komiyama M."/>
            <person name="Tashiro H."/>
            <person name="Tanigami A."/>
            <person name="Fujiwara T."/>
            <person name="Ono T."/>
            <person name="Yamada K."/>
            <person name="Fujii Y."/>
            <person name="Ozaki K."/>
            <person name="Hirao M."/>
            <person name="Ohmori Y."/>
            <person name="Kawabata A."/>
            <person name="Hikiji T."/>
            <person name="Kobatake N."/>
            <person name="Inagaki H."/>
            <person name="Ikema Y."/>
            <person name="Okamoto S."/>
            <person name="Okitani R."/>
            <person name="Kawakami T."/>
            <person name="Noguchi S."/>
            <person name="Itoh T."/>
            <person name="Shigeta K."/>
            <person name="Senba T."/>
            <person name="Matsumura K."/>
            <person name="Nakajima Y."/>
            <person name="Mizuno T."/>
            <person name="Morinaga M."/>
            <person name="Sasaki M."/>
            <person name="Togashi T."/>
            <person name="Oyama M."/>
            <person name="Hata H."/>
            <person name="Watanabe M."/>
            <person name="Komatsu T."/>
            <person name="Mizushima-Sugano J."/>
            <person name="Satoh T."/>
            <person name="Shirai Y."/>
            <person name="Takahashi Y."/>
            <person name="Nakagawa K."/>
            <person name="Okumura K."/>
            <person name="Nagase T."/>
            <person name="Nomura N."/>
            <person name="Kikuchi H."/>
            <person name="Masuho Y."/>
            <person name="Yamashita R."/>
            <person name="Nakai K."/>
            <person name="Yada T."/>
            <person name="Nakamura Y."/>
            <person name="Ohara O."/>
            <person name="Isogai T."/>
            <person name="Sugano S."/>
        </authorList>
    </citation>
    <scope>NUCLEOTIDE SEQUENCE [LARGE SCALE MRNA] (ISOFORM 2)</scope>
    <source>
        <tissue>Brain cortex</tissue>
        <tissue>Small intestine</tissue>
    </source>
</reference>
<reference key="4">
    <citation type="submission" date="2004-06" db="EMBL/GenBank/DDBJ databases">
        <title>Cloning of human full open reading frames in Gateway(TM) system entry vector (pDONR201).</title>
        <authorList>
            <person name="Ebert L."/>
            <person name="Schick M."/>
            <person name="Neubert P."/>
            <person name="Schatten R."/>
            <person name="Henze S."/>
            <person name="Korn B."/>
        </authorList>
    </citation>
    <scope>NUCLEOTIDE SEQUENCE [LARGE SCALE MRNA] (ISOFORM 2)</scope>
</reference>
<reference key="5">
    <citation type="submission" date="2005-07" db="EMBL/GenBank/DDBJ databases">
        <authorList>
            <person name="Mural R.J."/>
            <person name="Istrail S."/>
            <person name="Sutton G.G."/>
            <person name="Florea L."/>
            <person name="Halpern A.L."/>
            <person name="Mobarry C.M."/>
            <person name="Lippert R."/>
            <person name="Walenz B."/>
            <person name="Shatkay H."/>
            <person name="Dew I."/>
            <person name="Miller J.R."/>
            <person name="Flanigan M.J."/>
            <person name="Edwards N.J."/>
            <person name="Bolanos R."/>
            <person name="Fasulo D."/>
            <person name="Halldorsson B.V."/>
            <person name="Hannenhalli S."/>
            <person name="Turner R."/>
            <person name="Yooseph S."/>
            <person name="Lu F."/>
            <person name="Nusskern D.R."/>
            <person name="Shue B.C."/>
            <person name="Zheng X.H."/>
            <person name="Zhong F."/>
            <person name="Delcher A.L."/>
            <person name="Huson D.H."/>
            <person name="Kravitz S.A."/>
            <person name="Mouchard L."/>
            <person name="Reinert K."/>
            <person name="Remington K.A."/>
            <person name="Clark A.G."/>
            <person name="Waterman M.S."/>
            <person name="Eichler E.E."/>
            <person name="Adams M.D."/>
            <person name="Hunkapiller M.W."/>
            <person name="Myers E.W."/>
            <person name="Venter J.C."/>
        </authorList>
    </citation>
    <scope>NUCLEOTIDE SEQUENCE [LARGE SCALE GENOMIC DNA]</scope>
</reference>
<reference key="6">
    <citation type="journal article" date="2004" name="Genome Res.">
        <title>The status, quality, and expansion of the NIH full-length cDNA project: the Mammalian Gene Collection (MGC).</title>
        <authorList>
            <consortium name="The MGC Project Team"/>
        </authorList>
    </citation>
    <scope>NUCLEOTIDE SEQUENCE [LARGE SCALE MRNA] (ISOFORM 1)</scope>
    <source>
        <tissue>Uterus</tissue>
    </source>
</reference>
<reference key="7">
    <citation type="journal article" date="2011" name="BMC Syst. Biol.">
        <title>Initial characterization of the human central proteome.</title>
        <authorList>
            <person name="Burkard T.R."/>
            <person name="Planyavsky M."/>
            <person name="Kaupe I."/>
            <person name="Breitwieser F.P."/>
            <person name="Buerckstuemmer T."/>
            <person name="Bennett K.L."/>
            <person name="Superti-Furga G."/>
            <person name="Colinge J."/>
        </authorList>
    </citation>
    <scope>IDENTIFICATION BY MASS SPECTROMETRY [LARGE SCALE ANALYSIS]</scope>
</reference>
<reference key="8">
    <citation type="submission" date="2004-10" db="PDB data bank">
        <title>Structure of the putative human dehydrogenase MGC4172.</title>
        <authorList>
            <consortium name="Structural genomics consortium (SGC)"/>
        </authorList>
    </citation>
    <scope>X-RAY CRYSTALLOGRAPHY (1.53 ANGSTROMS) OF 1-256 (ISOFORM 1) IN COMPLEX WITH NADP AND ACETATE</scope>
    <scope>SUBUNIT</scope>
</reference>
<reference key="9">
    <citation type="journal article" date="2009" name="Chem. Biol. Interact.">
        <title>The SDR (short-chain dehydrogenase/reductase and related enzymes) nomenclature initiative.</title>
        <authorList>
            <person name="Persson B."/>
            <person name="Kallberg Y."/>
            <person name="Bray J.E."/>
            <person name="Bruford E."/>
            <person name="Dellaporta S.L."/>
            <person name="Favia A.D."/>
            <person name="Duarte R.G."/>
            <person name="Joernvall H."/>
            <person name="Kavanagh K.L."/>
            <person name="Kedishvili N."/>
            <person name="Kisiela M."/>
            <person name="Maser E."/>
            <person name="Mindnich R."/>
            <person name="Orchard S."/>
            <person name="Penning T.M."/>
            <person name="Thornton J.M."/>
            <person name="Adamski J."/>
            <person name="Oppermann U."/>
        </authorList>
    </citation>
    <scope>GENE FAMILY</scope>
    <scope>NOMENCLATURE</scope>
</reference>
<sequence>MARPGMERWRDRLALVTGASGGIGAAVARALVQQGLKVVGCARTVGNIEELAAECKSAGYPGTLIPYRCDLSNEEDILSMFSAIRSQHSGVDICINNAGLARPDTLLSGSTSGWKDMFNVNVLALSICTREAYQSMKERNVDDGHIININSMSGHRVLPLSVTHFYSATKYAVTALTEGLRQELREAQTHIRATCISPGVVETQFAFKLHDKDPEKAAATYEQMKCLKPEDVAEAVIYVLSTPAHIQIGDIQMRPTEQVT</sequence>
<organism>
    <name type="scientific">Homo sapiens</name>
    <name type="common">Human</name>
    <dbReference type="NCBI Taxonomy" id="9606"/>
    <lineage>
        <taxon>Eukaryota</taxon>
        <taxon>Metazoa</taxon>
        <taxon>Chordata</taxon>
        <taxon>Craniata</taxon>
        <taxon>Vertebrata</taxon>
        <taxon>Euteleostomi</taxon>
        <taxon>Mammalia</taxon>
        <taxon>Eutheria</taxon>
        <taxon>Euarchontoglires</taxon>
        <taxon>Primates</taxon>
        <taxon>Haplorrhini</taxon>
        <taxon>Catarrhini</taxon>
        <taxon>Hominidae</taxon>
        <taxon>Homo</taxon>
    </lineage>
</organism>